<evidence type="ECO:0000255" key="1">
    <source>
        <dbReference type="HAMAP-Rule" id="MF_00111"/>
    </source>
</evidence>
<proteinExistence type="inferred from homology"/>
<comment type="function">
    <text evidence="1">Cell wall formation. Adds enolpyruvyl to UDP-N-acetylglucosamine.</text>
</comment>
<comment type="catalytic activity">
    <reaction evidence="1">
        <text>phosphoenolpyruvate + UDP-N-acetyl-alpha-D-glucosamine = UDP-N-acetyl-3-O-(1-carboxyvinyl)-alpha-D-glucosamine + phosphate</text>
        <dbReference type="Rhea" id="RHEA:18681"/>
        <dbReference type="ChEBI" id="CHEBI:43474"/>
        <dbReference type="ChEBI" id="CHEBI:57705"/>
        <dbReference type="ChEBI" id="CHEBI:58702"/>
        <dbReference type="ChEBI" id="CHEBI:68483"/>
        <dbReference type="EC" id="2.5.1.7"/>
    </reaction>
</comment>
<comment type="pathway">
    <text evidence="1">Cell wall biogenesis; peptidoglycan biosynthesis.</text>
</comment>
<comment type="subcellular location">
    <subcellularLocation>
        <location evidence="1">Cytoplasm</location>
    </subcellularLocation>
</comment>
<comment type="similarity">
    <text evidence="1">Belongs to the EPSP synthase family. MurA subfamily.</text>
</comment>
<name>MURA_DESDA</name>
<accession>B8J283</accession>
<reference key="1">
    <citation type="submission" date="2009-01" db="EMBL/GenBank/DDBJ databases">
        <title>Complete sequence of Desulfovibrio desulfuricans subsp. desulfuricans str. ATCC 27774.</title>
        <authorList>
            <consortium name="US DOE Joint Genome Institute"/>
            <person name="Lucas S."/>
            <person name="Copeland A."/>
            <person name="Lapidus A."/>
            <person name="Glavina del Rio T."/>
            <person name="Tice H."/>
            <person name="Bruce D."/>
            <person name="Goodwin L."/>
            <person name="Pitluck S."/>
            <person name="Sims D."/>
            <person name="Lu M."/>
            <person name="Kiss H."/>
            <person name="Meineke L."/>
            <person name="Brettin T."/>
            <person name="Detter J.C."/>
            <person name="Han C."/>
            <person name="Larimer F."/>
            <person name="Land M."/>
            <person name="Hauser L."/>
            <person name="Kyrpides N."/>
            <person name="Ovchinnikova G."/>
            <person name="Hazen T.C."/>
        </authorList>
    </citation>
    <scope>NUCLEOTIDE SEQUENCE [LARGE SCALE GENOMIC DNA]</scope>
    <source>
        <strain>ATCC 27774 / DSM 6949 / MB</strain>
    </source>
</reference>
<dbReference type="EC" id="2.5.1.7" evidence="1"/>
<dbReference type="EMBL" id="CP001358">
    <property type="protein sequence ID" value="ACL49742.1"/>
    <property type="molecule type" value="Genomic_DNA"/>
</dbReference>
<dbReference type="SMR" id="B8J283"/>
<dbReference type="STRING" id="525146.Ddes_1845"/>
<dbReference type="KEGG" id="dds:Ddes_1845"/>
<dbReference type="eggNOG" id="COG0766">
    <property type="taxonomic scope" value="Bacteria"/>
</dbReference>
<dbReference type="HOGENOM" id="CLU_027387_0_0_7"/>
<dbReference type="UniPathway" id="UPA00219"/>
<dbReference type="GO" id="GO:0005737">
    <property type="term" value="C:cytoplasm"/>
    <property type="evidence" value="ECO:0007669"/>
    <property type="project" value="UniProtKB-SubCell"/>
</dbReference>
<dbReference type="GO" id="GO:0008760">
    <property type="term" value="F:UDP-N-acetylglucosamine 1-carboxyvinyltransferase activity"/>
    <property type="evidence" value="ECO:0007669"/>
    <property type="project" value="UniProtKB-UniRule"/>
</dbReference>
<dbReference type="GO" id="GO:0051301">
    <property type="term" value="P:cell division"/>
    <property type="evidence" value="ECO:0007669"/>
    <property type="project" value="UniProtKB-KW"/>
</dbReference>
<dbReference type="GO" id="GO:0071555">
    <property type="term" value="P:cell wall organization"/>
    <property type="evidence" value="ECO:0007669"/>
    <property type="project" value="UniProtKB-KW"/>
</dbReference>
<dbReference type="GO" id="GO:0009252">
    <property type="term" value="P:peptidoglycan biosynthetic process"/>
    <property type="evidence" value="ECO:0007669"/>
    <property type="project" value="UniProtKB-UniRule"/>
</dbReference>
<dbReference type="GO" id="GO:0008360">
    <property type="term" value="P:regulation of cell shape"/>
    <property type="evidence" value="ECO:0007669"/>
    <property type="project" value="UniProtKB-KW"/>
</dbReference>
<dbReference type="GO" id="GO:0019277">
    <property type="term" value="P:UDP-N-acetylgalactosamine biosynthetic process"/>
    <property type="evidence" value="ECO:0007669"/>
    <property type="project" value="InterPro"/>
</dbReference>
<dbReference type="CDD" id="cd01555">
    <property type="entry name" value="UdpNAET"/>
    <property type="match status" value="1"/>
</dbReference>
<dbReference type="FunFam" id="3.65.10.10:FF:000001">
    <property type="entry name" value="UDP-N-acetylglucosamine 1-carboxyvinyltransferase"/>
    <property type="match status" value="1"/>
</dbReference>
<dbReference type="Gene3D" id="3.65.10.10">
    <property type="entry name" value="Enolpyruvate transferase domain"/>
    <property type="match status" value="2"/>
</dbReference>
<dbReference type="HAMAP" id="MF_00111">
    <property type="entry name" value="MurA"/>
    <property type="match status" value="1"/>
</dbReference>
<dbReference type="InterPro" id="IPR001986">
    <property type="entry name" value="Enolpyruvate_Tfrase_dom"/>
</dbReference>
<dbReference type="InterPro" id="IPR036968">
    <property type="entry name" value="Enolpyruvate_Tfrase_sf"/>
</dbReference>
<dbReference type="InterPro" id="IPR050068">
    <property type="entry name" value="MurA_subfamily"/>
</dbReference>
<dbReference type="InterPro" id="IPR013792">
    <property type="entry name" value="RNA3'P_cycl/enolpyr_Trfase_a/b"/>
</dbReference>
<dbReference type="InterPro" id="IPR005750">
    <property type="entry name" value="UDP_GlcNAc_COvinyl_MurA"/>
</dbReference>
<dbReference type="NCBIfam" id="TIGR01072">
    <property type="entry name" value="murA"/>
    <property type="match status" value="1"/>
</dbReference>
<dbReference type="NCBIfam" id="NF006873">
    <property type="entry name" value="PRK09369.1"/>
    <property type="match status" value="1"/>
</dbReference>
<dbReference type="PANTHER" id="PTHR43783">
    <property type="entry name" value="UDP-N-ACETYLGLUCOSAMINE 1-CARBOXYVINYLTRANSFERASE"/>
    <property type="match status" value="1"/>
</dbReference>
<dbReference type="PANTHER" id="PTHR43783:SF1">
    <property type="entry name" value="UDP-N-ACETYLGLUCOSAMINE 1-CARBOXYVINYLTRANSFERASE"/>
    <property type="match status" value="1"/>
</dbReference>
<dbReference type="Pfam" id="PF00275">
    <property type="entry name" value="EPSP_synthase"/>
    <property type="match status" value="1"/>
</dbReference>
<dbReference type="SUPFAM" id="SSF55205">
    <property type="entry name" value="EPT/RTPC-like"/>
    <property type="match status" value="1"/>
</dbReference>
<sequence length="417" mass="44568">MDKLVIEGGVPLTGSIEVSGSKNAALPILFAAILPEEPVTITNVPDLRDIHTTLNLLKVLGCDCQYENGQVRIVPGSLLPEAPYDLVRTMRASVLCLGPLLARIGQARVALPGGCAIGARPVDQHLKGLEQMGASFQLEEGYIIGRCRKLTGAHITFDMPTVGGTENLLMAAVLAEGKTVLENVALEPEVVDLANFLCACGARISGQGTSCIRIEGVTSLHQATYPVMPDRIEAGTFLAAAGITGGELLLHNCPYDELESVILKLRSMGMEITQQGSGVLARCCAAPLRGTDVKTQPYPGFPTDMQAQIMALMCLAQGASVVEESIFENRFMHVLELMRMGAQIKVSGHTAMVRGVQKLTGAPVMASDLRASASLVLAGLAAQGVTEVRRIYHLDRGYEHIEHKLNAVGARIRREKQ</sequence>
<organism>
    <name type="scientific">Desulfovibrio desulfuricans (strain ATCC 27774 / DSM 6949 / MB)</name>
    <dbReference type="NCBI Taxonomy" id="525146"/>
    <lineage>
        <taxon>Bacteria</taxon>
        <taxon>Pseudomonadati</taxon>
        <taxon>Thermodesulfobacteriota</taxon>
        <taxon>Desulfovibrionia</taxon>
        <taxon>Desulfovibrionales</taxon>
        <taxon>Desulfovibrionaceae</taxon>
        <taxon>Desulfovibrio</taxon>
    </lineage>
</organism>
<gene>
    <name evidence="1" type="primary">murA</name>
    <name type="ordered locus">Ddes_1845</name>
</gene>
<keyword id="KW-0131">Cell cycle</keyword>
<keyword id="KW-0132">Cell division</keyword>
<keyword id="KW-0133">Cell shape</keyword>
<keyword id="KW-0961">Cell wall biogenesis/degradation</keyword>
<keyword id="KW-0963">Cytoplasm</keyword>
<keyword id="KW-0573">Peptidoglycan synthesis</keyword>
<keyword id="KW-0670">Pyruvate</keyword>
<keyword id="KW-0808">Transferase</keyword>
<feature type="chain" id="PRO_1000192080" description="UDP-N-acetylglucosamine 1-carboxyvinyltransferase">
    <location>
        <begin position="1"/>
        <end position="417"/>
    </location>
</feature>
<feature type="active site" description="Proton donor" evidence="1">
    <location>
        <position position="115"/>
    </location>
</feature>
<feature type="binding site" evidence="1">
    <location>
        <begin position="22"/>
        <end position="23"/>
    </location>
    <ligand>
        <name>phosphoenolpyruvate</name>
        <dbReference type="ChEBI" id="CHEBI:58702"/>
    </ligand>
</feature>
<feature type="binding site" evidence="1">
    <location>
        <position position="91"/>
    </location>
    <ligand>
        <name>UDP-N-acetyl-alpha-D-glucosamine</name>
        <dbReference type="ChEBI" id="CHEBI:57705"/>
    </ligand>
</feature>
<feature type="binding site" evidence="1">
    <location>
        <begin position="120"/>
        <end position="124"/>
    </location>
    <ligand>
        <name>UDP-N-acetyl-alpha-D-glucosamine</name>
        <dbReference type="ChEBI" id="CHEBI:57705"/>
    </ligand>
</feature>
<feature type="binding site" evidence="1">
    <location>
        <position position="304"/>
    </location>
    <ligand>
        <name>UDP-N-acetyl-alpha-D-glucosamine</name>
        <dbReference type="ChEBI" id="CHEBI:57705"/>
    </ligand>
</feature>
<feature type="binding site" evidence="1">
    <location>
        <position position="326"/>
    </location>
    <ligand>
        <name>UDP-N-acetyl-alpha-D-glucosamine</name>
        <dbReference type="ChEBI" id="CHEBI:57705"/>
    </ligand>
</feature>
<feature type="modified residue" description="2-(S-cysteinyl)pyruvic acid O-phosphothioketal" evidence="1">
    <location>
        <position position="115"/>
    </location>
</feature>
<protein>
    <recommendedName>
        <fullName evidence="1">UDP-N-acetylglucosamine 1-carboxyvinyltransferase</fullName>
        <ecNumber evidence="1">2.5.1.7</ecNumber>
    </recommendedName>
    <alternativeName>
        <fullName evidence="1">Enoylpyruvate transferase</fullName>
    </alternativeName>
    <alternativeName>
        <fullName evidence="1">UDP-N-acetylglucosamine enolpyruvyl transferase</fullName>
        <shortName evidence="1">EPT</shortName>
    </alternativeName>
</protein>